<evidence type="ECO:0000250" key="1">
    <source>
        <dbReference type="UniProtKB" id="O02351"/>
    </source>
</evidence>
<evidence type="ECO:0000250" key="2">
    <source>
        <dbReference type="UniProtKB" id="P26201"/>
    </source>
</evidence>
<evidence type="ECO:0000250" key="3">
    <source>
        <dbReference type="UniProtKB" id="Q9VDD3"/>
    </source>
</evidence>
<evidence type="ECO:0000255" key="4"/>
<evidence type="ECO:0000256" key="5">
    <source>
        <dbReference type="SAM" id="MobiDB-lite"/>
    </source>
</evidence>
<evidence type="ECO:0000305" key="6"/>
<evidence type="ECO:0000312" key="7">
    <source>
        <dbReference type="EMBL" id="EDV48284.1"/>
    </source>
</evidence>
<reference evidence="7" key="1">
    <citation type="journal article" date="2007" name="Nature">
        <title>Evolution of genes and genomes on the Drosophila phylogeny.</title>
        <authorList>
            <consortium name="Drosophila 12 genomes consortium"/>
        </authorList>
    </citation>
    <scope>NUCLEOTIDE SEQUENCE [LARGE SCALE GENOMIC DNA]</scope>
    <source>
        <strain evidence="7">Tucson 14021-0224.01</strain>
    </source>
</reference>
<accession>B3P048</accession>
<comment type="function">
    <text evidence="3">Plays an olfactory role that is not restricted to pheromone sensitivity.</text>
</comment>
<comment type="subcellular location">
    <subcellularLocation>
        <location evidence="1">Cell membrane</location>
        <topology evidence="1">Multi-pass membrane protein</topology>
    </subcellularLocation>
</comment>
<comment type="similarity">
    <text evidence="6">Belongs to the CD36 family.</text>
</comment>
<dbReference type="EMBL" id="CH954181">
    <property type="protein sequence ID" value="EDV48284.1"/>
    <property type="molecule type" value="Genomic_DNA"/>
</dbReference>
<dbReference type="SMR" id="B3P048"/>
<dbReference type="GlyCosmos" id="B3P048">
    <property type="glycosylation" value="4 sites, No reported glycans"/>
</dbReference>
<dbReference type="EnsemblMetazoa" id="FBtr0134870">
    <property type="protein sequence ID" value="FBpp0133362"/>
    <property type="gene ID" value="FBgn0107071"/>
</dbReference>
<dbReference type="EnsemblMetazoa" id="XM_001979290.3">
    <property type="protein sequence ID" value="XP_001979326.1"/>
    <property type="gene ID" value="LOC6553543"/>
</dbReference>
<dbReference type="GeneID" id="6553543"/>
<dbReference type="KEGG" id="der:6553543"/>
<dbReference type="CTD" id="42514"/>
<dbReference type="eggNOG" id="KOG3776">
    <property type="taxonomic scope" value="Eukaryota"/>
</dbReference>
<dbReference type="HOGENOM" id="CLU_019853_1_2_1"/>
<dbReference type="OMA" id="QRKSSYH"/>
<dbReference type="OrthoDB" id="10024078at2759"/>
<dbReference type="PhylomeDB" id="B3P048"/>
<dbReference type="ChiTaRS" id="Snmp1">
    <property type="organism name" value="fly"/>
</dbReference>
<dbReference type="Proteomes" id="UP000008711">
    <property type="component" value="Unassembled WGS sequence"/>
</dbReference>
<dbReference type="GO" id="GO:0005929">
    <property type="term" value="C:cilium"/>
    <property type="evidence" value="ECO:0007669"/>
    <property type="project" value="EnsemblMetazoa"/>
</dbReference>
<dbReference type="GO" id="GO:0005737">
    <property type="term" value="C:cytoplasm"/>
    <property type="evidence" value="ECO:0007669"/>
    <property type="project" value="TreeGrafter"/>
</dbReference>
<dbReference type="GO" id="GO:0030425">
    <property type="term" value="C:dendrite"/>
    <property type="evidence" value="ECO:0007669"/>
    <property type="project" value="EnsemblMetazoa"/>
</dbReference>
<dbReference type="GO" id="GO:0043025">
    <property type="term" value="C:neuronal cell body"/>
    <property type="evidence" value="ECO:0007669"/>
    <property type="project" value="EnsemblMetazoa"/>
</dbReference>
<dbReference type="GO" id="GO:0005886">
    <property type="term" value="C:plasma membrane"/>
    <property type="evidence" value="ECO:0007669"/>
    <property type="project" value="UniProtKB-SubCell"/>
</dbReference>
<dbReference type="GO" id="GO:0005044">
    <property type="term" value="F:scavenger receptor activity"/>
    <property type="evidence" value="ECO:0007669"/>
    <property type="project" value="TreeGrafter"/>
</dbReference>
<dbReference type="GO" id="GO:0007166">
    <property type="term" value="P:cell surface receptor signaling pathway"/>
    <property type="evidence" value="ECO:0007669"/>
    <property type="project" value="EnsemblMetazoa"/>
</dbReference>
<dbReference type="GO" id="GO:0071444">
    <property type="term" value="P:cellular response to pheromone"/>
    <property type="evidence" value="ECO:0007669"/>
    <property type="project" value="EnsemblMetazoa"/>
</dbReference>
<dbReference type="GO" id="GO:0050911">
    <property type="term" value="P:detection of chemical stimulus involved in sensory perception of smell"/>
    <property type="evidence" value="ECO:0007669"/>
    <property type="project" value="EnsemblMetazoa"/>
</dbReference>
<dbReference type="GO" id="GO:0055088">
    <property type="term" value="P:lipid homeostasis"/>
    <property type="evidence" value="ECO:0007669"/>
    <property type="project" value="EnsemblMetazoa"/>
</dbReference>
<dbReference type="GO" id="GO:0035073">
    <property type="term" value="P:pupariation"/>
    <property type="evidence" value="ECO:0007669"/>
    <property type="project" value="EnsemblMetazoa"/>
</dbReference>
<dbReference type="InterPro" id="IPR002159">
    <property type="entry name" value="CD36_fam"/>
</dbReference>
<dbReference type="PANTHER" id="PTHR11923">
    <property type="entry name" value="SCAVENGER RECEPTOR CLASS B TYPE-1 SR-B1"/>
    <property type="match status" value="1"/>
</dbReference>
<dbReference type="PANTHER" id="PTHR11923:SF69">
    <property type="entry name" value="SENSORY NEURON MEMBRANE PROTEIN 1"/>
    <property type="match status" value="1"/>
</dbReference>
<dbReference type="Pfam" id="PF01130">
    <property type="entry name" value="CD36"/>
    <property type="match status" value="1"/>
</dbReference>
<dbReference type="PRINTS" id="PR01609">
    <property type="entry name" value="CD36FAMILY"/>
</dbReference>
<protein>
    <recommendedName>
        <fullName evidence="3">Sensory neuron membrane protein 1</fullName>
    </recommendedName>
</protein>
<sequence>MQVPRLKLLMGSGAMFVFAIIYGWVIFPKILKFMISKQVTLKPGTDVRELWSNTPFPLHFYIYVFNVTNPDEVSEGAKPRLQEVGPFVFDEWKDKYDLEDDVVEDTVSFNMRNTFIFNPKETLPLTGEEEIILPHPIMQPGGISVQREKAAMMELVSKGLSIVFPDAKAFLKAKFMDLFFRGINVDCSSEEFSAKALCTVFYTGEVKQAKQVNQTHFLFSFMGQANHSDAGRFTVCRGVKNNKKLGKVVKFADETEQDIWPDGECNTFMGTDSTVFAPGLKKEDGLWAFTPDLCRSLGAYYQHKSSYHGMPSMRYTLDMGDIRADEKLHCFCEDPEDLDTCPPKGTMNLAACVGGPLMASMPHFYLADPKLIADVDGLNPNEKDHAVYIDFELMSGTPFQAAKRLQFNLDMEPVEGIEPMKNLPKLIMPMFWVEEGVHLNKTYTNLVKYTLFLGLKINSVLRWSLITFSLVGLMFSAYLFYHKSDSLDITSILKENNKVDDVTSTKEPLPPTNPKQSTTVHPVQVPNTLIPGTNPATNPATHLKMEHRERY</sequence>
<organism>
    <name type="scientific">Drosophila erecta</name>
    <name type="common">Fruit fly</name>
    <dbReference type="NCBI Taxonomy" id="7220"/>
    <lineage>
        <taxon>Eukaryota</taxon>
        <taxon>Metazoa</taxon>
        <taxon>Ecdysozoa</taxon>
        <taxon>Arthropoda</taxon>
        <taxon>Hexapoda</taxon>
        <taxon>Insecta</taxon>
        <taxon>Pterygota</taxon>
        <taxon>Neoptera</taxon>
        <taxon>Endopterygota</taxon>
        <taxon>Diptera</taxon>
        <taxon>Brachycera</taxon>
        <taxon>Muscomorpha</taxon>
        <taxon>Ephydroidea</taxon>
        <taxon>Drosophilidae</taxon>
        <taxon>Drosophila</taxon>
        <taxon>Sophophora</taxon>
    </lineage>
</organism>
<gene>
    <name evidence="3" type="primary">Snmp1</name>
    <name type="ORF">GG14816</name>
</gene>
<name>SNMP1_DROER</name>
<feature type="chain" id="PRO_0000408237" description="Sensory neuron membrane protein 1">
    <location>
        <begin position="1"/>
        <end position="551"/>
    </location>
</feature>
<feature type="topological domain" description="Cytoplasmic" evidence="4">
    <location>
        <begin position="1"/>
        <end position="7"/>
    </location>
</feature>
<feature type="transmembrane region" description="Helical" evidence="4">
    <location>
        <begin position="8"/>
        <end position="28"/>
    </location>
</feature>
<feature type="topological domain" description="Extracellular" evidence="4">
    <location>
        <begin position="29"/>
        <end position="459"/>
    </location>
</feature>
<feature type="transmembrane region" description="Helical" evidence="4">
    <location>
        <begin position="460"/>
        <end position="480"/>
    </location>
</feature>
<feature type="topological domain" description="Cytoplasmic" evidence="4">
    <location>
        <begin position="481"/>
        <end position="551"/>
    </location>
</feature>
<feature type="region of interest" description="Disordered" evidence="5">
    <location>
        <begin position="528"/>
        <end position="551"/>
    </location>
</feature>
<feature type="compositionally biased region" description="Polar residues" evidence="5">
    <location>
        <begin position="528"/>
        <end position="540"/>
    </location>
</feature>
<feature type="glycosylation site" description="N-linked (GlcNAc...) asparagine" evidence="4">
    <location>
        <position position="66"/>
    </location>
</feature>
<feature type="glycosylation site" description="N-linked (GlcNAc...) asparagine" evidence="4">
    <location>
        <position position="213"/>
    </location>
</feature>
<feature type="glycosylation site" description="N-linked (GlcNAc...) asparagine" evidence="4">
    <location>
        <position position="226"/>
    </location>
</feature>
<feature type="glycosylation site" description="N-linked (GlcNAc...) asparagine" evidence="4">
    <location>
        <position position="440"/>
    </location>
</feature>
<feature type="disulfide bond" evidence="2">
    <location>
        <begin position="265"/>
        <end position="330"/>
    </location>
</feature>
<feature type="disulfide bond" evidence="2">
    <location>
        <begin position="294"/>
        <end position="352"/>
    </location>
</feature>
<feature type="disulfide bond" evidence="2">
    <location>
        <begin position="332"/>
        <end position="341"/>
    </location>
</feature>
<proteinExistence type="inferred from homology"/>
<keyword id="KW-1003">Cell membrane</keyword>
<keyword id="KW-1015">Disulfide bond</keyword>
<keyword id="KW-0325">Glycoprotein</keyword>
<keyword id="KW-0472">Membrane</keyword>
<keyword id="KW-0552">Olfaction</keyword>
<keyword id="KW-0675">Receptor</keyword>
<keyword id="KW-0716">Sensory transduction</keyword>
<keyword id="KW-0812">Transmembrane</keyword>
<keyword id="KW-1133">Transmembrane helix</keyword>